<sequence length="235" mass="26294">MASAEGGGDKYRSFLHGDGEKKTVWRHGAPPNYDLVNKLFEEERTKEWAEGSVEEKVQRLLKTWEMEMVHKVRPEDQKSVNLKNYSASTNGLKPLTREEVMAMGGYNAFLATTLPPEHRIYDPEAESVESATSTFLTAFPRGFAIEVLDVYSSPSAPRIAFKFRHWGYMEGPFKGHPPHGGRVEFFGVCVFHVDEDTKVEKAEFFYERGNFLASFLTAPAASASASGCPVMRGAD</sequence>
<reference key="1">
    <citation type="journal article" date="1989" name="Nucleic Acids Res.">
        <title>Sequence of a near-full length cDNA clone for a mRNA of barley induced by fungal infection.</title>
        <authorList>
            <person name="Jutidamrongphan W."/>
            <person name="Mackinnon G."/>
            <person name="Manners J.M."/>
            <person name="Scott K.J."/>
        </authorList>
    </citation>
    <scope>NUCLEOTIDE SEQUENCE [MRNA]</scope>
    <source>
        <strain>cv. Psakon 4</strain>
        <tissue>Leaf</tissue>
    </source>
</reference>
<reference key="2">
    <citation type="submission" date="1994-06" db="EMBL/GenBank/DDBJ databases">
        <authorList>
            <person name="Scott K.J."/>
        </authorList>
    </citation>
    <scope>SEQUENCE REVISION</scope>
</reference>
<feature type="chain" id="PRO_0000097048" description="Pathogen-related protein">
    <location>
        <begin position="1"/>
        <end position="235"/>
    </location>
</feature>
<dbReference type="EMBL" id="X16648">
    <property type="protein sequence ID" value="CAA34641.1"/>
    <property type="molecule type" value="mRNA"/>
</dbReference>
<dbReference type="PIR" id="S09604">
    <property type="entry name" value="S09604"/>
</dbReference>
<dbReference type="PIR" id="T06168">
    <property type="entry name" value="T06168"/>
</dbReference>
<dbReference type="ExpressionAtlas" id="P16273">
    <property type="expression patterns" value="baseline and differential"/>
</dbReference>
<dbReference type="GO" id="GO:0006952">
    <property type="term" value="P:defense response"/>
    <property type="evidence" value="ECO:0007669"/>
    <property type="project" value="UniProtKB-KW"/>
</dbReference>
<dbReference type="Gene3D" id="3.10.450.50">
    <property type="match status" value="1"/>
</dbReference>
<dbReference type="InterPro" id="IPR032710">
    <property type="entry name" value="NTF2-like_dom_sf"/>
</dbReference>
<dbReference type="InterPro" id="IPR053218">
    <property type="entry name" value="Pathogen-related_defense"/>
</dbReference>
<dbReference type="PANTHER" id="PTHR31723:SF5">
    <property type="entry name" value="OS01G0248500 PROTEIN"/>
    <property type="match status" value="1"/>
</dbReference>
<dbReference type="PANTHER" id="PTHR31723">
    <property type="entry name" value="PATHOGENESIS-RELATED FAMILY PROTEIN"/>
    <property type="match status" value="1"/>
</dbReference>
<dbReference type="SUPFAM" id="SSF54427">
    <property type="entry name" value="NTF2-like"/>
    <property type="match status" value="1"/>
</dbReference>
<keyword id="KW-0568">Pathogenesis-related protein</keyword>
<keyword id="KW-0611">Plant defense</keyword>
<protein>
    <recommendedName>
        <fullName>Pathogen-related protein</fullName>
    </recommendedName>
</protein>
<comment type="induction">
    <text>By fungus Bipolaris sorokiniana infection.</text>
</comment>
<name>PRPX_HORVU</name>
<organism>
    <name type="scientific">Hordeum vulgare</name>
    <name type="common">Barley</name>
    <dbReference type="NCBI Taxonomy" id="4513"/>
    <lineage>
        <taxon>Eukaryota</taxon>
        <taxon>Viridiplantae</taxon>
        <taxon>Streptophyta</taxon>
        <taxon>Embryophyta</taxon>
        <taxon>Tracheophyta</taxon>
        <taxon>Spermatophyta</taxon>
        <taxon>Magnoliopsida</taxon>
        <taxon>Liliopsida</taxon>
        <taxon>Poales</taxon>
        <taxon>Poaceae</taxon>
        <taxon>BOP clade</taxon>
        <taxon>Pooideae</taxon>
        <taxon>Triticodae</taxon>
        <taxon>Triticeae</taxon>
        <taxon>Hordeinae</taxon>
        <taxon>Hordeum</taxon>
    </lineage>
</organism>
<accession>P16273</accession>
<proteinExistence type="evidence at transcript level"/>